<organism>
    <name type="scientific">Histophilus somni (strain 129Pt)</name>
    <name type="common">Haemophilus somnus</name>
    <dbReference type="NCBI Taxonomy" id="205914"/>
    <lineage>
        <taxon>Bacteria</taxon>
        <taxon>Pseudomonadati</taxon>
        <taxon>Pseudomonadota</taxon>
        <taxon>Gammaproteobacteria</taxon>
        <taxon>Pasteurellales</taxon>
        <taxon>Pasteurellaceae</taxon>
        <taxon>Histophilus</taxon>
    </lineage>
</organism>
<proteinExistence type="inferred from homology"/>
<feature type="chain" id="PRO_0000265257" description="Large ribosomal subunit protein uL6">
    <location>
        <begin position="1"/>
        <end position="177"/>
    </location>
</feature>
<sequence length="177" mass="19046">MSRVAKAPVSIPASVEVKLDGQLLTVKGKNGELSRTIHNSVEVKQDNNQLTFSPRVGIANADAQSGTARALVNAMVIGVNEGFTKKLQLVGVGYRAQMKGNVLVLSLGFSHPIDHVLPAGVTAECPSQTEIVLKSADKQLIGQVAADIRAYRRPEPYKGKGVRYADEVVRMKEAKKK</sequence>
<dbReference type="EMBL" id="CP000436">
    <property type="protein sequence ID" value="ABI24356.1"/>
    <property type="molecule type" value="Genomic_DNA"/>
</dbReference>
<dbReference type="SMR" id="Q0I147"/>
<dbReference type="KEGG" id="hso:HS_0075"/>
<dbReference type="eggNOG" id="COG0097">
    <property type="taxonomic scope" value="Bacteria"/>
</dbReference>
<dbReference type="HOGENOM" id="CLU_065464_1_2_6"/>
<dbReference type="GO" id="GO:0022625">
    <property type="term" value="C:cytosolic large ribosomal subunit"/>
    <property type="evidence" value="ECO:0007669"/>
    <property type="project" value="TreeGrafter"/>
</dbReference>
<dbReference type="GO" id="GO:0019843">
    <property type="term" value="F:rRNA binding"/>
    <property type="evidence" value="ECO:0007669"/>
    <property type="project" value="UniProtKB-UniRule"/>
</dbReference>
<dbReference type="GO" id="GO:0003735">
    <property type="term" value="F:structural constituent of ribosome"/>
    <property type="evidence" value="ECO:0007669"/>
    <property type="project" value="InterPro"/>
</dbReference>
<dbReference type="GO" id="GO:0002181">
    <property type="term" value="P:cytoplasmic translation"/>
    <property type="evidence" value="ECO:0007669"/>
    <property type="project" value="TreeGrafter"/>
</dbReference>
<dbReference type="FunFam" id="3.90.930.12:FF:000001">
    <property type="entry name" value="50S ribosomal protein L6"/>
    <property type="match status" value="1"/>
</dbReference>
<dbReference type="FunFam" id="3.90.930.12:FF:000002">
    <property type="entry name" value="50S ribosomal protein L6"/>
    <property type="match status" value="1"/>
</dbReference>
<dbReference type="Gene3D" id="3.90.930.12">
    <property type="entry name" value="Ribosomal protein L6, alpha-beta domain"/>
    <property type="match status" value="2"/>
</dbReference>
<dbReference type="HAMAP" id="MF_01365_B">
    <property type="entry name" value="Ribosomal_uL6_B"/>
    <property type="match status" value="1"/>
</dbReference>
<dbReference type="InterPro" id="IPR000702">
    <property type="entry name" value="Ribosomal_uL6-like"/>
</dbReference>
<dbReference type="InterPro" id="IPR036789">
    <property type="entry name" value="Ribosomal_uL6-like_a/b-dom_sf"/>
</dbReference>
<dbReference type="InterPro" id="IPR020040">
    <property type="entry name" value="Ribosomal_uL6_a/b-dom"/>
</dbReference>
<dbReference type="InterPro" id="IPR019906">
    <property type="entry name" value="Ribosomal_uL6_bac-type"/>
</dbReference>
<dbReference type="InterPro" id="IPR002358">
    <property type="entry name" value="Ribosomal_uL6_CS"/>
</dbReference>
<dbReference type="NCBIfam" id="TIGR03654">
    <property type="entry name" value="L6_bact"/>
    <property type="match status" value="1"/>
</dbReference>
<dbReference type="PANTHER" id="PTHR11655">
    <property type="entry name" value="60S/50S RIBOSOMAL PROTEIN L6/L9"/>
    <property type="match status" value="1"/>
</dbReference>
<dbReference type="PANTHER" id="PTHR11655:SF14">
    <property type="entry name" value="LARGE RIBOSOMAL SUBUNIT PROTEIN UL6M"/>
    <property type="match status" value="1"/>
</dbReference>
<dbReference type="Pfam" id="PF00347">
    <property type="entry name" value="Ribosomal_L6"/>
    <property type="match status" value="2"/>
</dbReference>
<dbReference type="PIRSF" id="PIRSF002162">
    <property type="entry name" value="Ribosomal_L6"/>
    <property type="match status" value="1"/>
</dbReference>
<dbReference type="PRINTS" id="PR00059">
    <property type="entry name" value="RIBOSOMALL6"/>
</dbReference>
<dbReference type="SUPFAM" id="SSF56053">
    <property type="entry name" value="Ribosomal protein L6"/>
    <property type="match status" value="2"/>
</dbReference>
<dbReference type="PROSITE" id="PS00525">
    <property type="entry name" value="RIBOSOMAL_L6_1"/>
    <property type="match status" value="1"/>
</dbReference>
<name>RL6_HISS1</name>
<gene>
    <name evidence="1" type="primary">rplF</name>
    <name type="ordered locus">HS_0075</name>
</gene>
<comment type="function">
    <text evidence="1">This protein binds to the 23S rRNA, and is important in its secondary structure. It is located near the subunit interface in the base of the L7/L12 stalk, and near the tRNA binding site of the peptidyltransferase center.</text>
</comment>
<comment type="subunit">
    <text evidence="1">Part of the 50S ribosomal subunit.</text>
</comment>
<comment type="similarity">
    <text evidence="1">Belongs to the universal ribosomal protein uL6 family.</text>
</comment>
<keyword id="KW-0687">Ribonucleoprotein</keyword>
<keyword id="KW-0689">Ribosomal protein</keyword>
<keyword id="KW-0694">RNA-binding</keyword>
<keyword id="KW-0699">rRNA-binding</keyword>
<reference key="1">
    <citation type="journal article" date="2007" name="J. Bacteriol.">
        <title>Complete genome sequence of Haemophilus somnus (Histophilus somni) strain 129Pt and comparison to Haemophilus ducreyi 35000HP and Haemophilus influenzae Rd.</title>
        <authorList>
            <person name="Challacombe J.F."/>
            <person name="Duncan A.J."/>
            <person name="Brettin T.S."/>
            <person name="Bruce D."/>
            <person name="Chertkov O."/>
            <person name="Detter J.C."/>
            <person name="Han C.S."/>
            <person name="Misra M."/>
            <person name="Richardson P."/>
            <person name="Tapia R."/>
            <person name="Thayer N."/>
            <person name="Xie G."/>
            <person name="Inzana T.J."/>
        </authorList>
    </citation>
    <scope>NUCLEOTIDE SEQUENCE [LARGE SCALE GENOMIC DNA]</scope>
    <source>
        <strain>129Pt</strain>
    </source>
</reference>
<evidence type="ECO:0000255" key="1">
    <source>
        <dbReference type="HAMAP-Rule" id="MF_01365"/>
    </source>
</evidence>
<evidence type="ECO:0000305" key="2"/>
<protein>
    <recommendedName>
        <fullName evidence="1">Large ribosomal subunit protein uL6</fullName>
    </recommendedName>
    <alternativeName>
        <fullName evidence="2">50S ribosomal protein L6</fullName>
    </alternativeName>
</protein>
<accession>Q0I147</accession>